<sequence>MVIKAQSPAGFAEEYIIESIWNNRFPPGTILPAERELSELIGVTRTTLREVLQRLARDGWLTIQHGKPTKVNNFWETSGLNILETLARLDHESVPQLIDNLLSVRTNISTIFIRTAFRQHPDKAQEVLATANEVADHADAFAELDYNIFRGLAFASGNPIYGLILNGMKGLYTRIGRHYFANPEARSLALGFYHKLSALCSEGAHDQVYETVRRYGHESGEIWHRMQKNLPGDLAIQGR</sequence>
<proteinExistence type="inferred from homology"/>
<evidence type="ECO:0000255" key="1">
    <source>
        <dbReference type="HAMAP-Rule" id="MF_00696"/>
    </source>
</evidence>
<dbReference type="EMBL" id="CP000034">
    <property type="protein sequence ID" value="ABB61376.1"/>
    <property type="molecule type" value="Genomic_DNA"/>
</dbReference>
<dbReference type="RefSeq" id="WP_000234823.1">
    <property type="nucleotide sequence ID" value="NC_007606.1"/>
</dbReference>
<dbReference type="RefSeq" id="YP_402867.1">
    <property type="nucleotide sequence ID" value="NC_007606.1"/>
</dbReference>
<dbReference type="SMR" id="Q32H29"/>
<dbReference type="STRING" id="300267.SDY_1224"/>
<dbReference type="EnsemblBacteria" id="ABB61376">
    <property type="protein sequence ID" value="ABB61376"/>
    <property type="gene ID" value="SDY_1224"/>
</dbReference>
<dbReference type="GeneID" id="93776245"/>
<dbReference type="KEGG" id="sdy:SDY_1224"/>
<dbReference type="PATRIC" id="fig|300267.13.peg.1452"/>
<dbReference type="HOGENOM" id="CLU_017584_9_4_6"/>
<dbReference type="Proteomes" id="UP000002716">
    <property type="component" value="Chromosome"/>
</dbReference>
<dbReference type="GO" id="GO:0005737">
    <property type="term" value="C:cytoplasm"/>
    <property type="evidence" value="ECO:0007669"/>
    <property type="project" value="UniProtKB-SubCell"/>
</dbReference>
<dbReference type="GO" id="GO:0003677">
    <property type="term" value="F:DNA binding"/>
    <property type="evidence" value="ECO:0007669"/>
    <property type="project" value="UniProtKB-KW"/>
</dbReference>
<dbReference type="GO" id="GO:0003700">
    <property type="term" value="F:DNA-binding transcription factor activity"/>
    <property type="evidence" value="ECO:0007669"/>
    <property type="project" value="UniProtKB-UniRule"/>
</dbReference>
<dbReference type="GO" id="GO:0000062">
    <property type="term" value="F:fatty-acyl-CoA binding"/>
    <property type="evidence" value="ECO:0007669"/>
    <property type="project" value="InterPro"/>
</dbReference>
<dbReference type="GO" id="GO:0006631">
    <property type="term" value="P:fatty acid metabolic process"/>
    <property type="evidence" value="ECO:0007669"/>
    <property type="project" value="UniProtKB-KW"/>
</dbReference>
<dbReference type="GO" id="GO:0019217">
    <property type="term" value="P:regulation of fatty acid metabolic process"/>
    <property type="evidence" value="ECO:0007669"/>
    <property type="project" value="UniProtKB-UniRule"/>
</dbReference>
<dbReference type="CDD" id="cd07377">
    <property type="entry name" value="WHTH_GntR"/>
    <property type="match status" value="1"/>
</dbReference>
<dbReference type="FunFam" id="1.10.10.10:FF:000036">
    <property type="entry name" value="Fatty acid metabolism regulator protein"/>
    <property type="match status" value="1"/>
</dbReference>
<dbReference type="FunFam" id="1.20.120.530:FF:000003">
    <property type="entry name" value="Fatty acid metabolism regulator protein"/>
    <property type="match status" value="1"/>
</dbReference>
<dbReference type="Gene3D" id="1.20.120.530">
    <property type="entry name" value="GntR ligand-binding domain-like"/>
    <property type="match status" value="1"/>
</dbReference>
<dbReference type="Gene3D" id="1.10.10.10">
    <property type="entry name" value="Winged helix-like DNA-binding domain superfamily/Winged helix DNA-binding domain"/>
    <property type="match status" value="1"/>
</dbReference>
<dbReference type="HAMAP" id="MF_00696">
    <property type="entry name" value="HTH_FadR"/>
    <property type="match status" value="1"/>
</dbReference>
<dbReference type="InterPro" id="IPR014178">
    <property type="entry name" value="FA-response_TF_FadR"/>
</dbReference>
<dbReference type="InterPro" id="IPR028374">
    <property type="entry name" value="FadR_C"/>
</dbReference>
<dbReference type="InterPro" id="IPR008920">
    <property type="entry name" value="TF_FadR/GntR_C"/>
</dbReference>
<dbReference type="InterPro" id="IPR000524">
    <property type="entry name" value="Tscrpt_reg_HTH_GntR"/>
</dbReference>
<dbReference type="InterPro" id="IPR036388">
    <property type="entry name" value="WH-like_DNA-bd_sf"/>
</dbReference>
<dbReference type="InterPro" id="IPR036390">
    <property type="entry name" value="WH_DNA-bd_sf"/>
</dbReference>
<dbReference type="NCBIfam" id="TIGR02812">
    <property type="entry name" value="fadR_gamma"/>
    <property type="match status" value="1"/>
</dbReference>
<dbReference type="NCBIfam" id="NF003444">
    <property type="entry name" value="PRK04984.1"/>
    <property type="match status" value="1"/>
</dbReference>
<dbReference type="PANTHER" id="PTHR43537:SF52">
    <property type="entry name" value="FATTY ACID METABOLISM REGULATOR PROTEIN"/>
    <property type="match status" value="1"/>
</dbReference>
<dbReference type="PANTHER" id="PTHR43537">
    <property type="entry name" value="TRANSCRIPTIONAL REGULATOR, GNTR FAMILY"/>
    <property type="match status" value="1"/>
</dbReference>
<dbReference type="Pfam" id="PF07840">
    <property type="entry name" value="FadR_C"/>
    <property type="match status" value="1"/>
</dbReference>
<dbReference type="Pfam" id="PF00392">
    <property type="entry name" value="GntR"/>
    <property type="match status" value="1"/>
</dbReference>
<dbReference type="PRINTS" id="PR00035">
    <property type="entry name" value="HTHGNTR"/>
</dbReference>
<dbReference type="SMART" id="SM00345">
    <property type="entry name" value="HTH_GNTR"/>
    <property type="match status" value="1"/>
</dbReference>
<dbReference type="SUPFAM" id="SSF48008">
    <property type="entry name" value="GntR ligand-binding domain-like"/>
    <property type="match status" value="1"/>
</dbReference>
<dbReference type="SUPFAM" id="SSF46785">
    <property type="entry name" value="Winged helix' DNA-binding domain"/>
    <property type="match status" value="1"/>
</dbReference>
<dbReference type="PROSITE" id="PS50949">
    <property type="entry name" value="HTH_GNTR"/>
    <property type="match status" value="1"/>
</dbReference>
<keyword id="KW-0010">Activator</keyword>
<keyword id="KW-0963">Cytoplasm</keyword>
<keyword id="KW-0238">DNA-binding</keyword>
<keyword id="KW-0276">Fatty acid metabolism</keyword>
<keyword id="KW-0443">Lipid metabolism</keyword>
<keyword id="KW-1185">Reference proteome</keyword>
<keyword id="KW-0678">Repressor</keyword>
<keyword id="KW-0804">Transcription</keyword>
<keyword id="KW-0805">Transcription regulation</keyword>
<feature type="chain" id="PRO_0000301515" description="Fatty acid metabolism regulator protein">
    <location>
        <begin position="1"/>
        <end position="239"/>
    </location>
</feature>
<feature type="domain" description="HTH gntR-type" evidence="1">
    <location>
        <begin position="6"/>
        <end position="74"/>
    </location>
</feature>
<feature type="DNA-binding region" description="H-T-H motif" evidence="1">
    <location>
        <begin position="34"/>
        <end position="53"/>
    </location>
</feature>
<name>FADR_SHIDS</name>
<organism>
    <name type="scientific">Shigella dysenteriae serotype 1 (strain Sd197)</name>
    <dbReference type="NCBI Taxonomy" id="300267"/>
    <lineage>
        <taxon>Bacteria</taxon>
        <taxon>Pseudomonadati</taxon>
        <taxon>Pseudomonadota</taxon>
        <taxon>Gammaproteobacteria</taxon>
        <taxon>Enterobacterales</taxon>
        <taxon>Enterobacteriaceae</taxon>
        <taxon>Shigella</taxon>
    </lineage>
</organism>
<accession>Q32H29</accession>
<protein>
    <recommendedName>
        <fullName evidence="1">Fatty acid metabolism regulator protein</fullName>
    </recommendedName>
</protein>
<gene>
    <name evidence="1" type="primary">fadR</name>
    <name type="ordered locus">SDY_1224</name>
</gene>
<comment type="function">
    <text evidence="1">Multifunctional regulator of fatty acid metabolism.</text>
</comment>
<comment type="subunit">
    <text evidence="1">Homodimer.</text>
</comment>
<comment type="subcellular location">
    <subcellularLocation>
        <location evidence="1">Cytoplasm</location>
    </subcellularLocation>
</comment>
<reference key="1">
    <citation type="journal article" date="2005" name="Nucleic Acids Res.">
        <title>Genome dynamics and diversity of Shigella species, the etiologic agents of bacillary dysentery.</title>
        <authorList>
            <person name="Yang F."/>
            <person name="Yang J."/>
            <person name="Zhang X."/>
            <person name="Chen L."/>
            <person name="Jiang Y."/>
            <person name="Yan Y."/>
            <person name="Tang X."/>
            <person name="Wang J."/>
            <person name="Xiong Z."/>
            <person name="Dong J."/>
            <person name="Xue Y."/>
            <person name="Zhu Y."/>
            <person name="Xu X."/>
            <person name="Sun L."/>
            <person name="Chen S."/>
            <person name="Nie H."/>
            <person name="Peng J."/>
            <person name="Xu J."/>
            <person name="Wang Y."/>
            <person name="Yuan Z."/>
            <person name="Wen Y."/>
            <person name="Yao Z."/>
            <person name="Shen Y."/>
            <person name="Qiang B."/>
            <person name="Hou Y."/>
            <person name="Yu J."/>
            <person name="Jin Q."/>
        </authorList>
    </citation>
    <scope>NUCLEOTIDE SEQUENCE [LARGE SCALE GENOMIC DNA]</scope>
    <source>
        <strain>Sd197</strain>
    </source>
</reference>